<proteinExistence type="inferred from homology"/>
<gene>
    <name evidence="1" type="primary">pgk</name>
    <name type="ordered locus">BP1001</name>
</gene>
<accession>Q7VZB8</accession>
<feature type="chain" id="PRO_0000145913" description="Phosphoglycerate kinase">
    <location>
        <begin position="1"/>
        <end position="397"/>
    </location>
</feature>
<feature type="binding site" evidence="1">
    <location>
        <begin position="26"/>
        <end position="28"/>
    </location>
    <ligand>
        <name>substrate</name>
    </ligand>
</feature>
<feature type="binding site" evidence="1">
    <location>
        <position position="42"/>
    </location>
    <ligand>
        <name>substrate</name>
    </ligand>
</feature>
<feature type="binding site" evidence="1">
    <location>
        <begin position="65"/>
        <end position="68"/>
    </location>
    <ligand>
        <name>substrate</name>
    </ligand>
</feature>
<feature type="binding site" evidence="1">
    <location>
        <position position="119"/>
    </location>
    <ligand>
        <name>substrate</name>
    </ligand>
</feature>
<feature type="binding site" evidence="1">
    <location>
        <position position="152"/>
    </location>
    <ligand>
        <name>substrate</name>
    </ligand>
</feature>
<feature type="binding site" evidence="1">
    <location>
        <position position="203"/>
    </location>
    <ligand>
        <name>ATP</name>
        <dbReference type="ChEBI" id="CHEBI:30616"/>
    </ligand>
</feature>
<feature type="binding site" evidence="1">
    <location>
        <position position="325"/>
    </location>
    <ligand>
        <name>ATP</name>
        <dbReference type="ChEBI" id="CHEBI:30616"/>
    </ligand>
</feature>
<feature type="binding site" evidence="1">
    <location>
        <begin position="351"/>
        <end position="354"/>
    </location>
    <ligand>
        <name>ATP</name>
        <dbReference type="ChEBI" id="CHEBI:30616"/>
    </ligand>
</feature>
<reference key="1">
    <citation type="journal article" date="2003" name="Nat. Genet.">
        <title>Comparative analysis of the genome sequences of Bordetella pertussis, Bordetella parapertussis and Bordetella bronchiseptica.</title>
        <authorList>
            <person name="Parkhill J."/>
            <person name="Sebaihia M."/>
            <person name="Preston A."/>
            <person name="Murphy L.D."/>
            <person name="Thomson N.R."/>
            <person name="Harris D.E."/>
            <person name="Holden M.T.G."/>
            <person name="Churcher C.M."/>
            <person name="Bentley S.D."/>
            <person name="Mungall K.L."/>
            <person name="Cerdeno-Tarraga A.-M."/>
            <person name="Temple L."/>
            <person name="James K.D."/>
            <person name="Harris B."/>
            <person name="Quail M.A."/>
            <person name="Achtman M."/>
            <person name="Atkin R."/>
            <person name="Baker S."/>
            <person name="Basham D."/>
            <person name="Bason N."/>
            <person name="Cherevach I."/>
            <person name="Chillingworth T."/>
            <person name="Collins M."/>
            <person name="Cronin A."/>
            <person name="Davis P."/>
            <person name="Doggett J."/>
            <person name="Feltwell T."/>
            <person name="Goble A."/>
            <person name="Hamlin N."/>
            <person name="Hauser H."/>
            <person name="Holroyd S."/>
            <person name="Jagels K."/>
            <person name="Leather S."/>
            <person name="Moule S."/>
            <person name="Norberczak H."/>
            <person name="O'Neil S."/>
            <person name="Ormond D."/>
            <person name="Price C."/>
            <person name="Rabbinowitsch E."/>
            <person name="Rutter S."/>
            <person name="Sanders M."/>
            <person name="Saunders D."/>
            <person name="Seeger K."/>
            <person name="Sharp S."/>
            <person name="Simmonds M."/>
            <person name="Skelton J."/>
            <person name="Squares R."/>
            <person name="Squares S."/>
            <person name="Stevens K."/>
            <person name="Unwin L."/>
            <person name="Whitehead S."/>
            <person name="Barrell B.G."/>
            <person name="Maskell D.J."/>
        </authorList>
    </citation>
    <scope>NUCLEOTIDE SEQUENCE [LARGE SCALE GENOMIC DNA]</scope>
    <source>
        <strain>Tohama I / ATCC BAA-589 / NCTC 13251</strain>
    </source>
</reference>
<sequence length="397" mass="41007">MSNVNTLSALAKSGALSGKRVFIRADLNVPFDDAGRISEDTRIRASVPGIRLALDAGAAVMVTSHLGRPKEGALTEADSLAPVAQRLSELLGMQVRLVPDWVDGVSVEPGEVVLLENCRGNVGEKKDDEGLSRKMAALCDVYVNDAFGTAHRAEATTHGIARFAPVACAGPLLEAELDALGRALHDPKRPLVAIVGGSKVSTKLSILQSLADKVDQLVVGGGIANTFMLAAGLPIGKSLAEPEQVEQARAVIEIMKRRGAEVPIPTDVVCAKSFGADAAATVKAAADVAEDDMILDIGPQTAQRLADILKTAGTIVWNGPVGVFEFDQFAHGTEVVARAIADSAGFSIAGGGDTLAAIAKYGIADQTGYISTGGGAFLEFLEGKALPAVAVLQARAA</sequence>
<protein>
    <recommendedName>
        <fullName evidence="1">Phosphoglycerate kinase</fullName>
        <ecNumber evidence="1">2.7.2.3</ecNumber>
    </recommendedName>
</protein>
<evidence type="ECO:0000255" key="1">
    <source>
        <dbReference type="HAMAP-Rule" id="MF_00145"/>
    </source>
</evidence>
<dbReference type="EC" id="2.7.2.3" evidence="1"/>
<dbReference type="EMBL" id="BX640414">
    <property type="protein sequence ID" value="CAE41302.1"/>
    <property type="molecule type" value="Genomic_DNA"/>
</dbReference>
<dbReference type="RefSeq" id="NP_879795.1">
    <property type="nucleotide sequence ID" value="NC_002929.2"/>
</dbReference>
<dbReference type="RefSeq" id="WP_010930133.1">
    <property type="nucleotide sequence ID" value="NZ_CP039022.1"/>
</dbReference>
<dbReference type="SMR" id="Q7VZB8"/>
<dbReference type="STRING" id="257313.BP1001"/>
<dbReference type="PaxDb" id="257313-BP1001"/>
<dbReference type="KEGG" id="bpe:BP1001"/>
<dbReference type="PATRIC" id="fig|257313.5.peg.1069"/>
<dbReference type="eggNOG" id="COG0126">
    <property type="taxonomic scope" value="Bacteria"/>
</dbReference>
<dbReference type="HOGENOM" id="CLU_025427_0_2_4"/>
<dbReference type="UniPathway" id="UPA00109">
    <property type="reaction ID" value="UER00185"/>
</dbReference>
<dbReference type="Proteomes" id="UP000002676">
    <property type="component" value="Chromosome"/>
</dbReference>
<dbReference type="GO" id="GO:0005829">
    <property type="term" value="C:cytosol"/>
    <property type="evidence" value="ECO:0007669"/>
    <property type="project" value="TreeGrafter"/>
</dbReference>
<dbReference type="GO" id="GO:0043531">
    <property type="term" value="F:ADP binding"/>
    <property type="evidence" value="ECO:0007669"/>
    <property type="project" value="TreeGrafter"/>
</dbReference>
<dbReference type="GO" id="GO:0005524">
    <property type="term" value="F:ATP binding"/>
    <property type="evidence" value="ECO:0007669"/>
    <property type="project" value="UniProtKB-KW"/>
</dbReference>
<dbReference type="GO" id="GO:0004618">
    <property type="term" value="F:phosphoglycerate kinase activity"/>
    <property type="evidence" value="ECO:0007669"/>
    <property type="project" value="UniProtKB-UniRule"/>
</dbReference>
<dbReference type="GO" id="GO:0006094">
    <property type="term" value="P:gluconeogenesis"/>
    <property type="evidence" value="ECO:0007669"/>
    <property type="project" value="TreeGrafter"/>
</dbReference>
<dbReference type="GO" id="GO:0006096">
    <property type="term" value="P:glycolytic process"/>
    <property type="evidence" value="ECO:0007669"/>
    <property type="project" value="UniProtKB-UniRule"/>
</dbReference>
<dbReference type="FunFam" id="3.40.50.1260:FF:000001">
    <property type="entry name" value="Phosphoglycerate kinase"/>
    <property type="match status" value="1"/>
</dbReference>
<dbReference type="FunFam" id="3.40.50.1260:FF:000002">
    <property type="entry name" value="Phosphoglycerate kinase"/>
    <property type="match status" value="1"/>
</dbReference>
<dbReference type="Gene3D" id="3.40.50.1260">
    <property type="entry name" value="Phosphoglycerate kinase, N-terminal domain"/>
    <property type="match status" value="2"/>
</dbReference>
<dbReference type="HAMAP" id="MF_00145">
    <property type="entry name" value="Phosphoglyc_kinase"/>
    <property type="match status" value="1"/>
</dbReference>
<dbReference type="InterPro" id="IPR001576">
    <property type="entry name" value="Phosphoglycerate_kinase"/>
</dbReference>
<dbReference type="InterPro" id="IPR015911">
    <property type="entry name" value="Phosphoglycerate_kinase_CS"/>
</dbReference>
<dbReference type="InterPro" id="IPR015824">
    <property type="entry name" value="Phosphoglycerate_kinase_N"/>
</dbReference>
<dbReference type="InterPro" id="IPR036043">
    <property type="entry name" value="Phosphoglycerate_kinase_sf"/>
</dbReference>
<dbReference type="PANTHER" id="PTHR11406">
    <property type="entry name" value="PHOSPHOGLYCERATE KINASE"/>
    <property type="match status" value="1"/>
</dbReference>
<dbReference type="PANTHER" id="PTHR11406:SF23">
    <property type="entry name" value="PHOSPHOGLYCERATE KINASE 1, CHLOROPLASTIC-RELATED"/>
    <property type="match status" value="1"/>
</dbReference>
<dbReference type="Pfam" id="PF00162">
    <property type="entry name" value="PGK"/>
    <property type="match status" value="1"/>
</dbReference>
<dbReference type="PIRSF" id="PIRSF000724">
    <property type="entry name" value="Pgk"/>
    <property type="match status" value="1"/>
</dbReference>
<dbReference type="PRINTS" id="PR00477">
    <property type="entry name" value="PHGLYCKINASE"/>
</dbReference>
<dbReference type="SUPFAM" id="SSF53748">
    <property type="entry name" value="Phosphoglycerate kinase"/>
    <property type="match status" value="1"/>
</dbReference>
<dbReference type="PROSITE" id="PS00111">
    <property type="entry name" value="PGLYCERATE_KINASE"/>
    <property type="match status" value="1"/>
</dbReference>
<name>PGK_BORPE</name>
<comment type="catalytic activity">
    <reaction evidence="1">
        <text>(2R)-3-phosphoglycerate + ATP = (2R)-3-phospho-glyceroyl phosphate + ADP</text>
        <dbReference type="Rhea" id="RHEA:14801"/>
        <dbReference type="ChEBI" id="CHEBI:30616"/>
        <dbReference type="ChEBI" id="CHEBI:57604"/>
        <dbReference type="ChEBI" id="CHEBI:58272"/>
        <dbReference type="ChEBI" id="CHEBI:456216"/>
        <dbReference type="EC" id="2.7.2.3"/>
    </reaction>
</comment>
<comment type="pathway">
    <text evidence="1">Carbohydrate degradation; glycolysis; pyruvate from D-glyceraldehyde 3-phosphate: step 2/5.</text>
</comment>
<comment type="subunit">
    <text evidence="1">Monomer.</text>
</comment>
<comment type="subcellular location">
    <subcellularLocation>
        <location evidence="1">Cytoplasm</location>
    </subcellularLocation>
</comment>
<comment type="similarity">
    <text evidence="1">Belongs to the phosphoglycerate kinase family.</text>
</comment>
<keyword id="KW-0067">ATP-binding</keyword>
<keyword id="KW-0963">Cytoplasm</keyword>
<keyword id="KW-0324">Glycolysis</keyword>
<keyword id="KW-0418">Kinase</keyword>
<keyword id="KW-0547">Nucleotide-binding</keyword>
<keyword id="KW-1185">Reference proteome</keyword>
<keyword id="KW-0808">Transferase</keyword>
<organism>
    <name type="scientific">Bordetella pertussis (strain Tohama I / ATCC BAA-589 / NCTC 13251)</name>
    <dbReference type="NCBI Taxonomy" id="257313"/>
    <lineage>
        <taxon>Bacteria</taxon>
        <taxon>Pseudomonadati</taxon>
        <taxon>Pseudomonadota</taxon>
        <taxon>Betaproteobacteria</taxon>
        <taxon>Burkholderiales</taxon>
        <taxon>Alcaligenaceae</taxon>
        <taxon>Bordetella</taxon>
    </lineage>
</organism>